<reference key="1">
    <citation type="journal article" date="1998" name="Science">
        <title>Genome sequence of the nematode C. elegans: a platform for investigating biology.</title>
        <authorList>
            <consortium name="The C. elegans sequencing consortium"/>
        </authorList>
    </citation>
    <scope>NUCLEOTIDE SEQUENCE [LARGE SCALE GENOMIC DNA]</scope>
    <source>
        <strain>Bristol N2</strain>
    </source>
</reference>
<reference key="2">
    <citation type="journal article" date="2011" name="PLoS Genet.">
        <title>Nuclear cGMP-dependent kinase regulates gene expression via activity-dependent recruitment of a conserved histone deacetylase complex.</title>
        <authorList>
            <person name="Hao Y."/>
            <person name="Xu N."/>
            <person name="Box A.C."/>
            <person name="Schaefer L."/>
            <person name="Kannan K."/>
            <person name="Zhang Y."/>
            <person name="Florens L."/>
            <person name="Seidel C."/>
            <person name="Washburn M.P."/>
            <person name="Wiegraebe W."/>
            <person name="Mak H.Y."/>
        </authorList>
    </citation>
    <scope>FUNCTION</scope>
    <scope>TISSUE SPECIFICITY</scope>
    <scope>MUTAGENESIS OF CYS-36</scope>
</reference>
<proteinExistence type="evidence at protein level"/>
<gene>
    <name type="ORF">Y45F10C.2</name>
</gene>
<evidence type="ECO:0000255" key="1"/>
<evidence type="ECO:0000269" key="2">
    <source>
    </source>
</evidence>
<evidence type="ECO:0000305" key="3"/>
<accession>O45941</accession>
<sequence length="117" mass="12842">MNSFVSTVLLLSVTIALVSGYPSQLQTTCVTKAKSCTMFFLNGVYCTECTYSGTLELKIGSTCTFSIYEKKVASQPNENSQNEVAQCKQSSCYSNQYVPVDCAAAFGNEYITYIENQ</sequence>
<dbReference type="EMBL" id="Z99273">
    <property type="protein sequence ID" value="CAB16475.1"/>
    <property type="molecule type" value="Genomic_DNA"/>
</dbReference>
<dbReference type="PIR" id="T26924">
    <property type="entry name" value="T26924"/>
</dbReference>
<dbReference type="RefSeq" id="NP_502639.1">
    <property type="nucleotide sequence ID" value="NM_070238.8"/>
</dbReference>
<dbReference type="STRING" id="6239.Y45F10C.2.1"/>
<dbReference type="PaxDb" id="6239-Y45F10C.2"/>
<dbReference type="PeptideAtlas" id="O45941"/>
<dbReference type="EnsemblMetazoa" id="Y45F10C.2.1">
    <property type="protein sequence ID" value="Y45F10C.2.1"/>
    <property type="gene ID" value="WBGene00012878"/>
</dbReference>
<dbReference type="GeneID" id="178334"/>
<dbReference type="KEGG" id="cel:CELE_Y45F10C.2"/>
<dbReference type="UCSC" id="Y45F10C.2">
    <property type="organism name" value="c. elegans"/>
</dbReference>
<dbReference type="AGR" id="WB:WBGene00012878"/>
<dbReference type="CTD" id="178334"/>
<dbReference type="WormBase" id="Y45F10C.2">
    <property type="protein sequence ID" value="CE16636"/>
    <property type="gene ID" value="WBGene00012878"/>
</dbReference>
<dbReference type="GeneTree" id="ENSGT00390000003521"/>
<dbReference type="HOGENOM" id="CLU_2086981_0_0_1"/>
<dbReference type="InParanoid" id="O45941"/>
<dbReference type="PhylomeDB" id="O45941"/>
<dbReference type="PRO" id="PR:O45941"/>
<dbReference type="Proteomes" id="UP000001940">
    <property type="component" value="Chromosome IV"/>
</dbReference>
<dbReference type="Bgee" id="WBGene00012878">
    <property type="expression patterns" value="Expressed in adult organism and 1 other cell type or tissue"/>
</dbReference>
<dbReference type="GO" id="GO:0005576">
    <property type="term" value="C:extracellular region"/>
    <property type="evidence" value="ECO:0007669"/>
    <property type="project" value="UniProtKB-SubCell"/>
</dbReference>
<dbReference type="InterPro" id="IPR009981">
    <property type="entry name" value="DUF1505"/>
</dbReference>
<dbReference type="Pfam" id="PF07403">
    <property type="entry name" value="DUF1505"/>
    <property type="match status" value="1"/>
</dbReference>
<feature type="signal peptide" evidence="1">
    <location>
        <begin position="1"/>
        <end position="20"/>
    </location>
</feature>
<feature type="chain" id="PRO_0000248527" description="UPF0375 protein Y45F10C.2">
    <location>
        <begin position="21"/>
        <end position="117"/>
    </location>
</feature>
<feature type="mutagenesis site" description="Promotes egg-laying." evidence="2">
    <original>C</original>
    <variation>A</variation>
    <location>
        <position position="36"/>
    </location>
</feature>
<protein>
    <recommendedName>
        <fullName>UPF0375 protein Y45F10C.2</fullName>
    </recommendedName>
</protein>
<organism>
    <name type="scientific">Caenorhabditis elegans</name>
    <dbReference type="NCBI Taxonomy" id="6239"/>
    <lineage>
        <taxon>Eukaryota</taxon>
        <taxon>Metazoa</taxon>
        <taxon>Ecdysozoa</taxon>
        <taxon>Nematoda</taxon>
        <taxon>Chromadorea</taxon>
        <taxon>Rhabditida</taxon>
        <taxon>Rhabditina</taxon>
        <taxon>Rhabditomorpha</taxon>
        <taxon>Rhabditoidea</taxon>
        <taxon>Rhabditidae</taxon>
        <taxon>Peloderinae</taxon>
        <taxon>Caenorhabditis</taxon>
    </lineage>
</organism>
<keyword id="KW-1185">Reference proteome</keyword>
<keyword id="KW-0964">Secreted</keyword>
<keyword id="KW-0732">Signal</keyword>
<comment type="function">
    <text evidence="2">Negatively regulates the egg-laying rate by promoting retention of fertilized eggs.</text>
</comment>
<comment type="subcellular location">
    <subcellularLocation>
        <location evidence="3">Secreted</location>
    </subcellularLocation>
</comment>
<comment type="tissue specificity">
    <text evidence="2">Expressed in the uterine epithelium.</text>
</comment>
<comment type="similarity">
    <text evidence="3">Belongs to the UPF0375 family.</text>
</comment>
<name>U375E_CAEEL</name>